<organism>
    <name type="scientific">Clavibacter michiganensis subsp. michiganensis (strain NCPPB 382)</name>
    <dbReference type="NCBI Taxonomy" id="443906"/>
    <lineage>
        <taxon>Bacteria</taxon>
        <taxon>Bacillati</taxon>
        <taxon>Actinomycetota</taxon>
        <taxon>Actinomycetes</taxon>
        <taxon>Micrococcales</taxon>
        <taxon>Microbacteriaceae</taxon>
        <taxon>Clavibacter</taxon>
    </lineage>
</organism>
<dbReference type="EC" id="2.7.7.6" evidence="1"/>
<dbReference type="EMBL" id="AM711867">
    <property type="protein sequence ID" value="CAN02714.1"/>
    <property type="molecule type" value="Genomic_DNA"/>
</dbReference>
<dbReference type="RefSeq" id="WP_012039320.1">
    <property type="nucleotide sequence ID" value="NC_009480.1"/>
</dbReference>
<dbReference type="SMR" id="A5CUC7"/>
<dbReference type="GeneID" id="92948634"/>
<dbReference type="KEGG" id="cmi:CMM_2631"/>
<dbReference type="eggNOG" id="COG0085">
    <property type="taxonomic scope" value="Bacteria"/>
</dbReference>
<dbReference type="HOGENOM" id="CLU_000524_4_1_11"/>
<dbReference type="OrthoDB" id="9803954at2"/>
<dbReference type="Proteomes" id="UP000001564">
    <property type="component" value="Chromosome"/>
</dbReference>
<dbReference type="GO" id="GO:0000428">
    <property type="term" value="C:DNA-directed RNA polymerase complex"/>
    <property type="evidence" value="ECO:0007669"/>
    <property type="project" value="UniProtKB-KW"/>
</dbReference>
<dbReference type="GO" id="GO:0003677">
    <property type="term" value="F:DNA binding"/>
    <property type="evidence" value="ECO:0007669"/>
    <property type="project" value="UniProtKB-UniRule"/>
</dbReference>
<dbReference type="GO" id="GO:0003899">
    <property type="term" value="F:DNA-directed RNA polymerase activity"/>
    <property type="evidence" value="ECO:0007669"/>
    <property type="project" value="UniProtKB-UniRule"/>
</dbReference>
<dbReference type="GO" id="GO:0032549">
    <property type="term" value="F:ribonucleoside binding"/>
    <property type="evidence" value="ECO:0007669"/>
    <property type="project" value="InterPro"/>
</dbReference>
<dbReference type="GO" id="GO:0006351">
    <property type="term" value="P:DNA-templated transcription"/>
    <property type="evidence" value="ECO:0007669"/>
    <property type="project" value="UniProtKB-UniRule"/>
</dbReference>
<dbReference type="CDD" id="cd00653">
    <property type="entry name" value="RNA_pol_B_RPB2"/>
    <property type="match status" value="1"/>
</dbReference>
<dbReference type="FunFam" id="3.90.1800.10:FF:000001">
    <property type="entry name" value="DNA-directed RNA polymerase subunit beta"/>
    <property type="match status" value="1"/>
</dbReference>
<dbReference type="Gene3D" id="2.40.50.100">
    <property type="match status" value="1"/>
</dbReference>
<dbReference type="Gene3D" id="2.40.50.150">
    <property type="match status" value="1"/>
</dbReference>
<dbReference type="Gene3D" id="3.90.1100.10">
    <property type="match status" value="1"/>
</dbReference>
<dbReference type="Gene3D" id="2.30.150.10">
    <property type="entry name" value="DNA-directed RNA polymerase, beta subunit, external 1 domain"/>
    <property type="match status" value="1"/>
</dbReference>
<dbReference type="Gene3D" id="2.40.270.10">
    <property type="entry name" value="DNA-directed RNA polymerase, subunit 2, domain 6"/>
    <property type="match status" value="1"/>
</dbReference>
<dbReference type="Gene3D" id="3.90.1800.10">
    <property type="entry name" value="RNA polymerase alpha subunit dimerisation domain"/>
    <property type="match status" value="1"/>
</dbReference>
<dbReference type="Gene3D" id="3.90.1110.10">
    <property type="entry name" value="RNA polymerase Rpb2, domain 2"/>
    <property type="match status" value="1"/>
</dbReference>
<dbReference type="HAMAP" id="MF_01321">
    <property type="entry name" value="RNApol_bact_RpoB"/>
    <property type="match status" value="1"/>
</dbReference>
<dbReference type="InterPro" id="IPR042107">
    <property type="entry name" value="DNA-dir_RNA_pol_bsu_ext_1_sf"/>
</dbReference>
<dbReference type="InterPro" id="IPR019462">
    <property type="entry name" value="DNA-dir_RNA_pol_bsu_external_1"/>
</dbReference>
<dbReference type="InterPro" id="IPR015712">
    <property type="entry name" value="DNA-dir_RNA_pol_su2"/>
</dbReference>
<dbReference type="InterPro" id="IPR007120">
    <property type="entry name" value="DNA-dir_RNAP_su2_dom"/>
</dbReference>
<dbReference type="InterPro" id="IPR037033">
    <property type="entry name" value="DNA-dir_RNAP_su2_hyb_sf"/>
</dbReference>
<dbReference type="InterPro" id="IPR010243">
    <property type="entry name" value="RNA_pol_bsu_bac"/>
</dbReference>
<dbReference type="InterPro" id="IPR007121">
    <property type="entry name" value="RNA_pol_bsu_CS"/>
</dbReference>
<dbReference type="InterPro" id="IPR007644">
    <property type="entry name" value="RNA_pol_bsu_protrusion"/>
</dbReference>
<dbReference type="InterPro" id="IPR007642">
    <property type="entry name" value="RNA_pol_Rpb2_2"/>
</dbReference>
<dbReference type="InterPro" id="IPR037034">
    <property type="entry name" value="RNA_pol_Rpb2_2_sf"/>
</dbReference>
<dbReference type="InterPro" id="IPR007645">
    <property type="entry name" value="RNA_pol_Rpb2_3"/>
</dbReference>
<dbReference type="InterPro" id="IPR007641">
    <property type="entry name" value="RNA_pol_Rpb2_7"/>
</dbReference>
<dbReference type="InterPro" id="IPR014724">
    <property type="entry name" value="RNA_pol_RPB2_OB-fold"/>
</dbReference>
<dbReference type="NCBIfam" id="NF001616">
    <property type="entry name" value="PRK00405.1"/>
    <property type="match status" value="1"/>
</dbReference>
<dbReference type="NCBIfam" id="TIGR02013">
    <property type="entry name" value="rpoB"/>
    <property type="match status" value="1"/>
</dbReference>
<dbReference type="PANTHER" id="PTHR20856">
    <property type="entry name" value="DNA-DIRECTED RNA POLYMERASE I SUBUNIT 2"/>
    <property type="match status" value="1"/>
</dbReference>
<dbReference type="Pfam" id="PF04563">
    <property type="entry name" value="RNA_pol_Rpb2_1"/>
    <property type="match status" value="1"/>
</dbReference>
<dbReference type="Pfam" id="PF04561">
    <property type="entry name" value="RNA_pol_Rpb2_2"/>
    <property type="match status" value="1"/>
</dbReference>
<dbReference type="Pfam" id="PF04565">
    <property type="entry name" value="RNA_pol_Rpb2_3"/>
    <property type="match status" value="1"/>
</dbReference>
<dbReference type="Pfam" id="PF10385">
    <property type="entry name" value="RNA_pol_Rpb2_45"/>
    <property type="match status" value="1"/>
</dbReference>
<dbReference type="Pfam" id="PF00562">
    <property type="entry name" value="RNA_pol_Rpb2_6"/>
    <property type="match status" value="1"/>
</dbReference>
<dbReference type="Pfam" id="PF04560">
    <property type="entry name" value="RNA_pol_Rpb2_7"/>
    <property type="match status" value="1"/>
</dbReference>
<dbReference type="SUPFAM" id="SSF64484">
    <property type="entry name" value="beta and beta-prime subunits of DNA dependent RNA-polymerase"/>
    <property type="match status" value="1"/>
</dbReference>
<dbReference type="PROSITE" id="PS01166">
    <property type="entry name" value="RNA_POL_BETA"/>
    <property type="match status" value="1"/>
</dbReference>
<proteinExistence type="inferred from homology"/>
<comment type="function">
    <text evidence="1">DNA-dependent RNA polymerase catalyzes the transcription of DNA into RNA using the four ribonucleoside triphosphates as substrates.</text>
</comment>
<comment type="catalytic activity">
    <reaction evidence="1">
        <text>RNA(n) + a ribonucleoside 5'-triphosphate = RNA(n+1) + diphosphate</text>
        <dbReference type="Rhea" id="RHEA:21248"/>
        <dbReference type="Rhea" id="RHEA-COMP:14527"/>
        <dbReference type="Rhea" id="RHEA-COMP:17342"/>
        <dbReference type="ChEBI" id="CHEBI:33019"/>
        <dbReference type="ChEBI" id="CHEBI:61557"/>
        <dbReference type="ChEBI" id="CHEBI:140395"/>
        <dbReference type="EC" id="2.7.7.6"/>
    </reaction>
</comment>
<comment type="subunit">
    <text evidence="1">The RNAP catalytic core consists of 2 alpha, 1 beta, 1 beta' and 1 omega subunit. When a sigma factor is associated with the core the holoenzyme is formed, which can initiate transcription.</text>
</comment>
<comment type="similarity">
    <text evidence="1">Belongs to the RNA polymerase beta chain family.</text>
</comment>
<name>RPOB_CLAM3</name>
<sequence length="1162" mass="128599">MAAARNATPTPQNGRDASRLSFAKITDTLTVPDLLALQTESFDWLVGSDAWKRRVEEGTAQGRTDLALNSGLEEIFEEISPIEDLGETMQLGFTNPYLEEQKYSIDECKERGKTYSAPLYVEAEFMNHLTGEIKTQTVFMGDFPLMTEKGTFIINGTERVVVSQLVRSPGVYFERQQEKTSDKDIYSARVIPSRGAWLEFEIDKRDQVGVRIDRKRKQSVTVFLKALGLTSEQILEEFKGVASIELTLEKDSILTKEEALKDIYRKLRPGEQVAAEAARALLDNFYFNPKRYDLAKVGRYKINRKLGIDKQLTDSVLTVEDILATIKYLVSLHANETKMNGTRDGKPVELRLDVDDIDHFGNRRIRAVGELIQNQVRTGLSRMERVVRERMTTQDIEAITPQTLINVRPVVAAIKEFFGTSQLSQFMDQNNPLAGLTHKRRLSALGPGGLSRERAGVEVRDVHPSHYGRMCPIETPEGPNIGLIGSLASFARINSFGFIETPYRRVVDGVVTDTIDYLTASEEDEFLVAQANAPLTKDFRFAEDRVLVRPKGGEVELVAKENVHYMDVSPRQMVSVATSLIPFLEHDDANRALMGANMQRQAVPLLRSESPLVGTGMEGYAAIDAGDVLTADASGVVQEVSAEVVTIQLDEGGTQTYYLRKFDRSNQGTSYNHRVLVSAGDRIEAGEVIADGPATENGELALGKNLLVAFMPWEGHNFEDAIILSQNLVKDDTLSSIHIEEYEVDARDTKLGKEEITRDLPNVSPELLADLDERGIIRIGAEVRPGDILVGKVTPKGETELSAEERLLRAIFNEKSREVRDTSLKVPHGEQGTIIGVKVFDSQDGDDELGSGVNQRVVVFIAQKRKITEGDKLAGRHGNKGVISKILPVEDMPFLADGTPVDVILNPLGIPGRMNFGQVLETHLGWIAKQGWEVEGKPKWAERLPDHARQAPAGTKVATPVFDGALEEEIAGLLDSTTVTRDGDRLIGSSGKTRLFDGRSGEPFPEPVSVGYMYILKLHHLVDDKIHARSTGPYSMITQQPLGGKAQFGGQRFGEMEVWALEAYGAAYALQELLTIKSDDILGRVKVYEAIVKGENIQEPGIPESFKVLIKEMQSLCLNVEVLSADGQAVSLRDTDDEVFRAAEELGINISTRFESSSIDDI</sequence>
<evidence type="ECO:0000255" key="1">
    <source>
        <dbReference type="HAMAP-Rule" id="MF_01321"/>
    </source>
</evidence>
<reference key="1">
    <citation type="journal article" date="2008" name="J. Bacteriol.">
        <title>The genome sequence of the tomato-pathogenic actinomycete Clavibacter michiganensis subsp. michiganensis NCPPB382 reveals a large island involved in pathogenicity.</title>
        <authorList>
            <person name="Gartemann K.-H."/>
            <person name="Abt B."/>
            <person name="Bekel T."/>
            <person name="Burger A."/>
            <person name="Engemann J."/>
            <person name="Fluegel M."/>
            <person name="Gaigalat L."/>
            <person name="Goesmann A."/>
            <person name="Graefen I."/>
            <person name="Kalinowski J."/>
            <person name="Kaup O."/>
            <person name="Kirchner O."/>
            <person name="Krause L."/>
            <person name="Linke B."/>
            <person name="McHardy A."/>
            <person name="Meyer F."/>
            <person name="Pohle S."/>
            <person name="Rueckert C."/>
            <person name="Schneiker S."/>
            <person name="Zellermann E.-M."/>
            <person name="Puehler A."/>
            <person name="Eichenlaub R."/>
            <person name="Kaiser O."/>
            <person name="Bartels D."/>
        </authorList>
    </citation>
    <scope>NUCLEOTIDE SEQUENCE [LARGE SCALE GENOMIC DNA]</scope>
    <source>
        <strain>NCPPB 382</strain>
    </source>
</reference>
<accession>A5CUC7</accession>
<gene>
    <name evidence="1" type="primary">rpoB</name>
    <name type="ordered locus">CMM_2631</name>
</gene>
<protein>
    <recommendedName>
        <fullName evidence="1">DNA-directed RNA polymerase subunit beta</fullName>
        <shortName evidence="1">RNAP subunit beta</shortName>
        <ecNumber evidence="1">2.7.7.6</ecNumber>
    </recommendedName>
    <alternativeName>
        <fullName evidence="1">RNA polymerase subunit beta</fullName>
    </alternativeName>
    <alternativeName>
        <fullName evidence="1">Transcriptase subunit beta</fullName>
    </alternativeName>
</protein>
<keyword id="KW-0240">DNA-directed RNA polymerase</keyword>
<keyword id="KW-0548">Nucleotidyltransferase</keyword>
<keyword id="KW-0804">Transcription</keyword>
<keyword id="KW-0808">Transferase</keyword>
<feature type="chain" id="PRO_0000329170" description="DNA-directed RNA polymerase subunit beta">
    <location>
        <begin position="1"/>
        <end position="1162"/>
    </location>
</feature>